<gene>
    <name evidence="1" type="primary">cysZ</name>
    <name type="ordered locus">VC_0969</name>
</gene>
<evidence type="ECO:0000255" key="1">
    <source>
        <dbReference type="HAMAP-Rule" id="MF_00468"/>
    </source>
</evidence>
<name>CYSZ_VIBCH</name>
<reference key="1">
    <citation type="journal article" date="2000" name="Nature">
        <title>DNA sequence of both chromosomes of the cholera pathogen Vibrio cholerae.</title>
        <authorList>
            <person name="Heidelberg J.F."/>
            <person name="Eisen J.A."/>
            <person name="Nelson W.C."/>
            <person name="Clayton R.A."/>
            <person name="Gwinn M.L."/>
            <person name="Dodson R.J."/>
            <person name="Haft D.H."/>
            <person name="Hickey E.K."/>
            <person name="Peterson J.D."/>
            <person name="Umayam L.A."/>
            <person name="Gill S.R."/>
            <person name="Nelson K.E."/>
            <person name="Read T.D."/>
            <person name="Tettelin H."/>
            <person name="Richardson D.L."/>
            <person name="Ermolaeva M.D."/>
            <person name="Vamathevan J.J."/>
            <person name="Bass S."/>
            <person name="Qin H."/>
            <person name="Dragoi I."/>
            <person name="Sellers P."/>
            <person name="McDonald L.A."/>
            <person name="Utterback T.R."/>
            <person name="Fleischmann R.D."/>
            <person name="Nierman W.C."/>
            <person name="White O."/>
            <person name="Salzberg S.L."/>
            <person name="Smith H.O."/>
            <person name="Colwell R.R."/>
            <person name="Mekalanos J.J."/>
            <person name="Venter J.C."/>
            <person name="Fraser C.M."/>
        </authorList>
    </citation>
    <scope>NUCLEOTIDE SEQUENCE [LARGE SCALE GENOMIC DNA]</scope>
    <source>
        <strain>ATCC 39315 / El Tor Inaba N16961</strain>
    </source>
</reference>
<sequence>MQISSRSGFGYFSYGIRLALTPGIRRFVVLPLLANIILVGGAMYYLFSHLDTWISEWIGQLPSFLSWLSYVLWPLLALTILATFSYFFSTLANFIASPFNGLLAEKVEQHLSGERIGEEGVWALVKDVPRILSREWRKLLYVLPKALGLFLLLLIPALGQTLGPIAWFLFTAWMLAIQYCDYPFDNHKISFHDMRNTLKQNQSKAYGFGMLVAFFTSIPIVNLFIVPVAVCGATAMWVMEFKIQHSPLRQ</sequence>
<protein>
    <recommendedName>
        <fullName evidence="1">Sulfate transporter CysZ</fullName>
    </recommendedName>
</protein>
<accession>Q9KTD3</accession>
<proteinExistence type="inferred from homology"/>
<comment type="function">
    <text evidence="1">High affinity, high specificity proton-dependent sulfate transporter, which mediates sulfate uptake. Provides the sulfur source for the cysteine synthesis pathway.</text>
</comment>
<comment type="subcellular location">
    <subcellularLocation>
        <location evidence="1">Cell inner membrane</location>
        <topology evidence="1">Multi-pass membrane protein</topology>
    </subcellularLocation>
</comment>
<comment type="similarity">
    <text evidence="1">Belongs to the CysZ family.</text>
</comment>
<organism>
    <name type="scientific">Vibrio cholerae serotype O1 (strain ATCC 39315 / El Tor Inaba N16961)</name>
    <dbReference type="NCBI Taxonomy" id="243277"/>
    <lineage>
        <taxon>Bacteria</taxon>
        <taxon>Pseudomonadati</taxon>
        <taxon>Pseudomonadota</taxon>
        <taxon>Gammaproteobacteria</taxon>
        <taxon>Vibrionales</taxon>
        <taxon>Vibrionaceae</taxon>
        <taxon>Vibrio</taxon>
    </lineage>
</organism>
<keyword id="KW-0028">Amino-acid biosynthesis</keyword>
<keyword id="KW-0997">Cell inner membrane</keyword>
<keyword id="KW-1003">Cell membrane</keyword>
<keyword id="KW-0198">Cysteine biosynthesis</keyword>
<keyword id="KW-0472">Membrane</keyword>
<keyword id="KW-1185">Reference proteome</keyword>
<keyword id="KW-0764">Sulfate transport</keyword>
<keyword id="KW-0812">Transmembrane</keyword>
<keyword id="KW-1133">Transmembrane helix</keyword>
<keyword id="KW-0813">Transport</keyword>
<feature type="chain" id="PRO_0000204351" description="Sulfate transporter CysZ">
    <location>
        <begin position="1"/>
        <end position="250"/>
    </location>
</feature>
<feature type="transmembrane region" description="Helical" evidence="1">
    <location>
        <begin position="27"/>
        <end position="47"/>
    </location>
</feature>
<feature type="transmembrane region" description="Helical" evidence="1">
    <location>
        <begin position="64"/>
        <end position="84"/>
    </location>
</feature>
<feature type="transmembrane region" description="Helical" evidence="1">
    <location>
        <begin position="150"/>
        <end position="170"/>
    </location>
</feature>
<feature type="transmembrane region" description="Helical" evidence="1">
    <location>
        <begin position="210"/>
        <end position="230"/>
    </location>
</feature>
<dbReference type="EMBL" id="AE003852">
    <property type="protein sequence ID" value="AAF94131.1"/>
    <property type="molecule type" value="Genomic_DNA"/>
</dbReference>
<dbReference type="PIR" id="D82258">
    <property type="entry name" value="D82258"/>
</dbReference>
<dbReference type="RefSeq" id="NP_230616.1">
    <property type="nucleotide sequence ID" value="NC_002505.1"/>
</dbReference>
<dbReference type="RefSeq" id="WP_001167408.1">
    <property type="nucleotide sequence ID" value="NZ_LT906614.1"/>
</dbReference>
<dbReference type="SMR" id="Q9KTD3"/>
<dbReference type="STRING" id="243277.VC_0969"/>
<dbReference type="DNASU" id="2614222"/>
<dbReference type="EnsemblBacteria" id="AAF94131">
    <property type="protein sequence ID" value="AAF94131"/>
    <property type="gene ID" value="VC_0969"/>
</dbReference>
<dbReference type="KEGG" id="vch:VC_0969"/>
<dbReference type="PATRIC" id="fig|243277.26.peg.922"/>
<dbReference type="eggNOG" id="COG2981">
    <property type="taxonomic scope" value="Bacteria"/>
</dbReference>
<dbReference type="HOGENOM" id="CLU_070331_1_0_6"/>
<dbReference type="Proteomes" id="UP000000584">
    <property type="component" value="Chromosome 1"/>
</dbReference>
<dbReference type="GO" id="GO:0005886">
    <property type="term" value="C:plasma membrane"/>
    <property type="evidence" value="ECO:0000318"/>
    <property type="project" value="GO_Central"/>
</dbReference>
<dbReference type="GO" id="GO:0009675">
    <property type="term" value="F:high-affinity sulfate:proton symporter activity"/>
    <property type="evidence" value="ECO:0000318"/>
    <property type="project" value="GO_Central"/>
</dbReference>
<dbReference type="GO" id="GO:0019344">
    <property type="term" value="P:cysteine biosynthetic process"/>
    <property type="evidence" value="ECO:0000318"/>
    <property type="project" value="GO_Central"/>
</dbReference>
<dbReference type="GO" id="GO:0000103">
    <property type="term" value="P:sulfate assimilation"/>
    <property type="evidence" value="ECO:0000318"/>
    <property type="project" value="GO_Central"/>
</dbReference>
<dbReference type="HAMAP" id="MF_00468">
    <property type="entry name" value="CysZ"/>
    <property type="match status" value="1"/>
</dbReference>
<dbReference type="InterPro" id="IPR050480">
    <property type="entry name" value="CysZ_sulfate_transptr"/>
</dbReference>
<dbReference type="InterPro" id="IPR022985">
    <property type="entry name" value="Sulfate_CysZ"/>
</dbReference>
<dbReference type="NCBIfam" id="NF003433">
    <property type="entry name" value="PRK04949.1"/>
    <property type="match status" value="1"/>
</dbReference>
<dbReference type="PANTHER" id="PTHR37468">
    <property type="entry name" value="SULFATE TRANSPORTER CYSZ"/>
    <property type="match status" value="1"/>
</dbReference>
<dbReference type="PANTHER" id="PTHR37468:SF1">
    <property type="entry name" value="SULFATE TRANSPORTER CYSZ"/>
    <property type="match status" value="1"/>
</dbReference>
<dbReference type="Pfam" id="PF07264">
    <property type="entry name" value="EI24"/>
    <property type="match status" value="1"/>
</dbReference>